<sequence>MKIKILSTGDEIVSGGVVDTNASWLAASLLGLGLTVDCFVAVGDDFGTLRRTIADLAAETDILIVTGGLGPTNDDITAEAAAGAVNTKTILNPEALGLVTDYFNRKGWPMNPSNKKQAVLPRDCRVIENEVGTAPGFYLRISGCHGFFMPGVPKEMKAMTLNWVLPWIQRYAAKNLGRTLTDITPRTITVFGLPESEVGARLKDLATQFPGVRPGFRADFPLIQVKLYPDSEKRGGGENILDQAEQFVVTTLGRWVISREGLTMEQEVGRLLVQKKATIALAESCTGGLMASMLTDVPGSSEYFIFSGVTYSNEAKIRVLGVRQSTLESHGAVSEETAGEMAQGVRRLTQATYGISTSGVAGPGGGSPEKPVGMVCIGIAGPGFCTTKRYGFAFNDRTMNKQIFAVTALGALRKRMLMQGGSV</sequence>
<comment type="similarity">
    <text evidence="1">Belongs to the CinA family.</text>
</comment>
<organism>
    <name type="scientific">Desulforapulum autotrophicum (strain ATCC 43914 / DSM 3382 / VKM B-1955 / HRM2)</name>
    <name type="common">Desulfobacterium autotrophicum</name>
    <dbReference type="NCBI Taxonomy" id="177437"/>
    <lineage>
        <taxon>Bacteria</taxon>
        <taxon>Pseudomonadati</taxon>
        <taxon>Thermodesulfobacteriota</taxon>
        <taxon>Desulfobacteria</taxon>
        <taxon>Desulfobacterales</taxon>
        <taxon>Desulfobacteraceae</taxon>
        <taxon>Desulforapulum</taxon>
    </lineage>
</organism>
<accession>C0QI20</accession>
<name>CINAL_DESAH</name>
<evidence type="ECO:0000255" key="1">
    <source>
        <dbReference type="HAMAP-Rule" id="MF_00226"/>
    </source>
</evidence>
<feature type="chain" id="PRO_1000204323" description="CinA-like protein">
    <location>
        <begin position="1"/>
        <end position="423"/>
    </location>
</feature>
<keyword id="KW-1185">Reference proteome</keyword>
<reference key="1">
    <citation type="journal article" date="2009" name="Environ. Microbiol.">
        <title>Genome sequence of Desulfobacterium autotrophicum HRM2, a marine sulfate reducer oxidizing organic carbon completely to carbon dioxide.</title>
        <authorList>
            <person name="Strittmatter A.W."/>
            <person name="Liesegang H."/>
            <person name="Rabus R."/>
            <person name="Decker I."/>
            <person name="Amann J."/>
            <person name="Andres S."/>
            <person name="Henne A."/>
            <person name="Fricke W.F."/>
            <person name="Martinez-Arias R."/>
            <person name="Bartels D."/>
            <person name="Goesmann A."/>
            <person name="Krause L."/>
            <person name="Puehler A."/>
            <person name="Klenk H.P."/>
            <person name="Richter M."/>
            <person name="Schuler M."/>
            <person name="Gloeckner F.O."/>
            <person name="Meyerdierks A."/>
            <person name="Gottschalk G."/>
            <person name="Amann R."/>
        </authorList>
    </citation>
    <scope>NUCLEOTIDE SEQUENCE [LARGE SCALE GENOMIC DNA]</scope>
    <source>
        <strain>ATCC 43914 / DSM 3382 / VKM B-1955 / HRM2</strain>
    </source>
</reference>
<dbReference type="EMBL" id="CP001087">
    <property type="protein sequence ID" value="ACN15756.1"/>
    <property type="molecule type" value="Genomic_DNA"/>
</dbReference>
<dbReference type="RefSeq" id="WP_015904519.1">
    <property type="nucleotide sequence ID" value="NC_012108.1"/>
</dbReference>
<dbReference type="SMR" id="C0QI20"/>
<dbReference type="STRING" id="177437.HRM2_26620"/>
<dbReference type="KEGG" id="dat:HRM2_26620"/>
<dbReference type="eggNOG" id="COG1058">
    <property type="taxonomic scope" value="Bacteria"/>
</dbReference>
<dbReference type="eggNOG" id="COG1546">
    <property type="taxonomic scope" value="Bacteria"/>
</dbReference>
<dbReference type="HOGENOM" id="CLU_030805_9_2_7"/>
<dbReference type="OrthoDB" id="9801454at2"/>
<dbReference type="Proteomes" id="UP000000442">
    <property type="component" value="Chromosome"/>
</dbReference>
<dbReference type="CDD" id="cd00885">
    <property type="entry name" value="cinA"/>
    <property type="match status" value="1"/>
</dbReference>
<dbReference type="Gene3D" id="3.90.950.20">
    <property type="entry name" value="CinA-like"/>
    <property type="match status" value="1"/>
</dbReference>
<dbReference type="Gene3D" id="3.40.980.10">
    <property type="entry name" value="MoaB/Mog-like domain"/>
    <property type="match status" value="1"/>
</dbReference>
<dbReference type="HAMAP" id="MF_00226_B">
    <property type="entry name" value="CinA_B"/>
    <property type="match status" value="1"/>
</dbReference>
<dbReference type="InterPro" id="IPR050101">
    <property type="entry name" value="CinA"/>
</dbReference>
<dbReference type="InterPro" id="IPR036653">
    <property type="entry name" value="CinA-like_C"/>
</dbReference>
<dbReference type="InterPro" id="IPR008136">
    <property type="entry name" value="CinA_C"/>
</dbReference>
<dbReference type="InterPro" id="IPR008135">
    <property type="entry name" value="Competence-induced_CinA"/>
</dbReference>
<dbReference type="InterPro" id="IPR036425">
    <property type="entry name" value="MoaB/Mog-like_dom_sf"/>
</dbReference>
<dbReference type="InterPro" id="IPR001453">
    <property type="entry name" value="MoaB/Mog_dom"/>
</dbReference>
<dbReference type="NCBIfam" id="TIGR00200">
    <property type="entry name" value="cinA_nterm"/>
    <property type="match status" value="1"/>
</dbReference>
<dbReference type="NCBIfam" id="TIGR00177">
    <property type="entry name" value="molyb_syn"/>
    <property type="match status" value="1"/>
</dbReference>
<dbReference type="NCBIfam" id="TIGR00199">
    <property type="entry name" value="PncC_domain"/>
    <property type="match status" value="1"/>
</dbReference>
<dbReference type="PANTHER" id="PTHR13939">
    <property type="entry name" value="NICOTINAMIDE-NUCLEOTIDE AMIDOHYDROLASE PNCC"/>
    <property type="match status" value="1"/>
</dbReference>
<dbReference type="PANTHER" id="PTHR13939:SF0">
    <property type="entry name" value="NMN AMIDOHYDROLASE-LIKE PROTEIN YFAY"/>
    <property type="match status" value="1"/>
</dbReference>
<dbReference type="Pfam" id="PF02464">
    <property type="entry name" value="CinA"/>
    <property type="match status" value="1"/>
</dbReference>
<dbReference type="Pfam" id="PF00994">
    <property type="entry name" value="MoCF_biosynth"/>
    <property type="match status" value="1"/>
</dbReference>
<dbReference type="PIRSF" id="PIRSF006728">
    <property type="entry name" value="CinA"/>
    <property type="match status" value="1"/>
</dbReference>
<dbReference type="SMART" id="SM00852">
    <property type="entry name" value="MoCF_biosynth"/>
    <property type="match status" value="1"/>
</dbReference>
<dbReference type="SUPFAM" id="SSF142433">
    <property type="entry name" value="CinA-like"/>
    <property type="match status" value="1"/>
</dbReference>
<dbReference type="SUPFAM" id="SSF53218">
    <property type="entry name" value="Molybdenum cofactor biosynthesis proteins"/>
    <property type="match status" value="1"/>
</dbReference>
<proteinExistence type="inferred from homology"/>
<gene>
    <name type="ordered locus">HRM2_26620</name>
</gene>
<protein>
    <recommendedName>
        <fullName evidence="1">CinA-like protein</fullName>
    </recommendedName>
</protein>